<accession>A1W0G6</accession>
<comment type="similarity">
    <text evidence="1">Belongs to the universal ribosomal protein uS2 family.</text>
</comment>
<protein>
    <recommendedName>
        <fullName evidence="1">Small ribosomal subunit protein uS2</fullName>
    </recommendedName>
    <alternativeName>
        <fullName evidence="3">30S ribosomal protein S2</fullName>
    </alternativeName>
</protein>
<feature type="chain" id="PRO_1000003923" description="Small ribosomal subunit protein uS2">
    <location>
        <begin position="1"/>
        <end position="263"/>
    </location>
</feature>
<feature type="region of interest" description="Disordered" evidence="2">
    <location>
        <begin position="223"/>
        <end position="263"/>
    </location>
</feature>
<feature type="compositionally biased region" description="Basic and acidic residues" evidence="2">
    <location>
        <begin position="223"/>
        <end position="249"/>
    </location>
</feature>
<feature type="compositionally biased region" description="Acidic residues" evidence="2">
    <location>
        <begin position="250"/>
        <end position="263"/>
    </location>
</feature>
<evidence type="ECO:0000255" key="1">
    <source>
        <dbReference type="HAMAP-Rule" id="MF_00291"/>
    </source>
</evidence>
<evidence type="ECO:0000256" key="2">
    <source>
        <dbReference type="SAM" id="MobiDB-lite"/>
    </source>
</evidence>
<evidence type="ECO:0000305" key="3"/>
<reference key="1">
    <citation type="submission" date="2006-12" db="EMBL/GenBank/DDBJ databases">
        <authorList>
            <person name="Fouts D.E."/>
            <person name="Nelson K.E."/>
            <person name="Sebastian Y."/>
        </authorList>
    </citation>
    <scope>NUCLEOTIDE SEQUENCE [LARGE SCALE GENOMIC DNA]</scope>
    <source>
        <strain>81-176</strain>
    </source>
</reference>
<organism>
    <name type="scientific">Campylobacter jejuni subsp. jejuni serotype O:23/36 (strain 81-176)</name>
    <dbReference type="NCBI Taxonomy" id="354242"/>
    <lineage>
        <taxon>Bacteria</taxon>
        <taxon>Pseudomonadati</taxon>
        <taxon>Campylobacterota</taxon>
        <taxon>Epsilonproteobacteria</taxon>
        <taxon>Campylobacterales</taxon>
        <taxon>Campylobacteraceae</taxon>
        <taxon>Campylobacter</taxon>
    </lineage>
</organism>
<gene>
    <name evidence="1" type="primary">rpsB</name>
    <name type="ordered locus">CJJ81176_1197</name>
</gene>
<dbReference type="EMBL" id="CP000538">
    <property type="protein sequence ID" value="EAQ72270.1"/>
    <property type="molecule type" value="Genomic_DNA"/>
</dbReference>
<dbReference type="RefSeq" id="WP_002853455.1">
    <property type="nucleotide sequence ID" value="NC_008787.1"/>
</dbReference>
<dbReference type="SMR" id="A1W0G6"/>
<dbReference type="KEGG" id="cjj:CJJ81176_1197"/>
<dbReference type="eggNOG" id="COG0052">
    <property type="taxonomic scope" value="Bacteria"/>
</dbReference>
<dbReference type="HOGENOM" id="CLU_040318_1_2_7"/>
<dbReference type="Proteomes" id="UP000000646">
    <property type="component" value="Chromosome"/>
</dbReference>
<dbReference type="GO" id="GO:0022627">
    <property type="term" value="C:cytosolic small ribosomal subunit"/>
    <property type="evidence" value="ECO:0007669"/>
    <property type="project" value="TreeGrafter"/>
</dbReference>
<dbReference type="GO" id="GO:0003735">
    <property type="term" value="F:structural constituent of ribosome"/>
    <property type="evidence" value="ECO:0007669"/>
    <property type="project" value="InterPro"/>
</dbReference>
<dbReference type="GO" id="GO:0006412">
    <property type="term" value="P:translation"/>
    <property type="evidence" value="ECO:0007669"/>
    <property type="project" value="UniProtKB-UniRule"/>
</dbReference>
<dbReference type="CDD" id="cd01425">
    <property type="entry name" value="RPS2"/>
    <property type="match status" value="1"/>
</dbReference>
<dbReference type="FunFam" id="1.10.287.610:FF:000001">
    <property type="entry name" value="30S ribosomal protein S2"/>
    <property type="match status" value="1"/>
</dbReference>
<dbReference type="Gene3D" id="3.40.50.10490">
    <property type="entry name" value="Glucose-6-phosphate isomerase like protein, domain 1"/>
    <property type="match status" value="1"/>
</dbReference>
<dbReference type="Gene3D" id="1.10.287.610">
    <property type="entry name" value="Helix hairpin bin"/>
    <property type="match status" value="1"/>
</dbReference>
<dbReference type="HAMAP" id="MF_00291_B">
    <property type="entry name" value="Ribosomal_uS2_B"/>
    <property type="match status" value="1"/>
</dbReference>
<dbReference type="InterPro" id="IPR001865">
    <property type="entry name" value="Ribosomal_uS2"/>
</dbReference>
<dbReference type="InterPro" id="IPR005706">
    <property type="entry name" value="Ribosomal_uS2_bac/mit/plastid"/>
</dbReference>
<dbReference type="InterPro" id="IPR018130">
    <property type="entry name" value="Ribosomal_uS2_CS"/>
</dbReference>
<dbReference type="InterPro" id="IPR023591">
    <property type="entry name" value="Ribosomal_uS2_flav_dom_sf"/>
</dbReference>
<dbReference type="NCBIfam" id="TIGR01011">
    <property type="entry name" value="rpsB_bact"/>
    <property type="match status" value="1"/>
</dbReference>
<dbReference type="PANTHER" id="PTHR12534">
    <property type="entry name" value="30S RIBOSOMAL PROTEIN S2 PROKARYOTIC AND ORGANELLAR"/>
    <property type="match status" value="1"/>
</dbReference>
<dbReference type="PANTHER" id="PTHR12534:SF0">
    <property type="entry name" value="SMALL RIBOSOMAL SUBUNIT PROTEIN US2M"/>
    <property type="match status" value="1"/>
</dbReference>
<dbReference type="Pfam" id="PF00318">
    <property type="entry name" value="Ribosomal_S2"/>
    <property type="match status" value="1"/>
</dbReference>
<dbReference type="PRINTS" id="PR00395">
    <property type="entry name" value="RIBOSOMALS2"/>
</dbReference>
<dbReference type="SUPFAM" id="SSF52313">
    <property type="entry name" value="Ribosomal protein S2"/>
    <property type="match status" value="1"/>
</dbReference>
<dbReference type="PROSITE" id="PS00962">
    <property type="entry name" value="RIBOSOMAL_S2_1"/>
    <property type="match status" value="1"/>
</dbReference>
<dbReference type="PROSITE" id="PS00963">
    <property type="entry name" value="RIBOSOMAL_S2_2"/>
    <property type="match status" value="1"/>
</dbReference>
<proteinExistence type="inferred from homology"/>
<name>RS2_CAMJJ</name>
<sequence>MVSMRDLLECGVHFGHQTRRWNPKMKKFIFGERKGIYVIDLQKTLRYFRYTYNIVRDAAAEGKTILFVGTKKQAGGAIKEYAEKCGMPYVNHRWLGGMMTNFGTIRQSIRKLEVIEKMEEDGSIKLLTKKEALMLTRKKEKLLAYLGGIRYMKTQPDMIFVIDTVKEKIAVQEANRLRIPVVAPLDTNCDPDLVTYPIPGNDDAIRSVQLFCQEMAEAINEGKALREQDGEALANEEKEITDEEKKEVLDEAMSEEDFGEEQE</sequence>
<keyword id="KW-0687">Ribonucleoprotein</keyword>
<keyword id="KW-0689">Ribosomal protein</keyword>